<protein>
    <recommendedName>
        <fullName>Type IV major fimbrial protein FimA</fullName>
    </recommendedName>
    <alternativeName>
        <fullName>265 antigen</fullName>
    </alternativeName>
    <alternativeName>
        <fullName>Pilin</fullName>
    </alternativeName>
    <alternativeName>
        <fullName>Serogroup H1</fullName>
    </alternativeName>
    <alternativeName>
        <fullName>Two subunits pilin</fullName>
    </alternativeName>
    <component>
        <recommendedName>
            <fullName>Pilin subunit 1</fullName>
        </recommendedName>
    </component>
    <component>
        <recommendedName>
            <fullName>Pilin subunit 2</fullName>
        </recommendedName>
    </component>
</protein>
<dbReference type="EMBL" id="M13765">
    <property type="protein sequence ID" value="AAA23346.1"/>
    <property type="molecule type" value="Genomic_DNA"/>
</dbReference>
<dbReference type="EMBL" id="X52390">
    <property type="protein sequence ID" value="CAA36619.1"/>
    <property type="molecule type" value="Genomic_DNA"/>
</dbReference>
<dbReference type="PIR" id="S15267">
    <property type="entry name" value="S15267"/>
</dbReference>
<dbReference type="SMR" id="P04953"/>
<dbReference type="GO" id="GO:0016020">
    <property type="term" value="C:membrane"/>
    <property type="evidence" value="ECO:0007669"/>
    <property type="project" value="UniProtKB-SubCell"/>
</dbReference>
<dbReference type="GO" id="GO:0009289">
    <property type="term" value="C:pilus"/>
    <property type="evidence" value="ECO:0007669"/>
    <property type="project" value="UniProtKB-SubCell"/>
</dbReference>
<dbReference type="GO" id="GO:0015627">
    <property type="term" value="C:type II protein secretion system complex"/>
    <property type="evidence" value="ECO:0007669"/>
    <property type="project" value="InterPro"/>
</dbReference>
<dbReference type="GO" id="GO:0007155">
    <property type="term" value="P:cell adhesion"/>
    <property type="evidence" value="ECO:0007669"/>
    <property type="project" value="InterPro"/>
</dbReference>
<dbReference type="GO" id="GO:0015628">
    <property type="term" value="P:protein secretion by the type II secretion system"/>
    <property type="evidence" value="ECO:0007669"/>
    <property type="project" value="InterPro"/>
</dbReference>
<dbReference type="Gene3D" id="3.30.700.10">
    <property type="entry name" value="Glycoprotein, Type 4 Pilin"/>
    <property type="match status" value="1"/>
</dbReference>
<dbReference type="InterPro" id="IPR000983">
    <property type="entry name" value="Bac_GSPG_pilin"/>
</dbReference>
<dbReference type="InterPro" id="IPR012902">
    <property type="entry name" value="N_methyl_site"/>
</dbReference>
<dbReference type="InterPro" id="IPR001082">
    <property type="entry name" value="Pilin"/>
</dbReference>
<dbReference type="InterPro" id="IPR045584">
    <property type="entry name" value="Pilin-like"/>
</dbReference>
<dbReference type="InterPro" id="IPR050470">
    <property type="entry name" value="T4P/T2SS_Core"/>
</dbReference>
<dbReference type="NCBIfam" id="TIGR02532">
    <property type="entry name" value="IV_pilin_GFxxxE"/>
    <property type="match status" value="1"/>
</dbReference>
<dbReference type="PANTHER" id="PTHR30093">
    <property type="entry name" value="GENERAL SECRETION PATHWAY PROTEIN G"/>
    <property type="match status" value="1"/>
</dbReference>
<dbReference type="PANTHER" id="PTHR30093:SF34">
    <property type="entry name" value="PREPILIN PEPTIDASE-DEPENDENT PROTEIN D"/>
    <property type="match status" value="1"/>
</dbReference>
<dbReference type="Pfam" id="PF07963">
    <property type="entry name" value="N_methyl"/>
    <property type="match status" value="1"/>
</dbReference>
<dbReference type="Pfam" id="PF00114">
    <property type="entry name" value="Pilin"/>
    <property type="match status" value="1"/>
</dbReference>
<dbReference type="PRINTS" id="PR00813">
    <property type="entry name" value="BCTERIALGSPG"/>
</dbReference>
<dbReference type="SUPFAM" id="SSF54523">
    <property type="entry name" value="Pili subunits"/>
    <property type="match status" value="1"/>
</dbReference>
<dbReference type="PROSITE" id="PS00409">
    <property type="entry name" value="PROKAR_NTER_METHYL"/>
    <property type="match status" value="1"/>
</dbReference>
<reference key="1">
    <citation type="journal article" date="1986" name="J. Bacteriol.">
        <title>Nucleotide sequence of the gene encoding the two-subunit pilin of Bacteroides nodosus 265.</title>
        <authorList>
            <person name="Elleman T.C."/>
            <person name="Hoyne P.A."/>
            <person name="McKern N.M."/>
            <person name="Stewart D.J."/>
        </authorList>
    </citation>
    <scope>NUCLEOTIDE SEQUENCE [GENOMIC DNA]</scope>
    <source>
        <strain>Serogroup H isolate 265</strain>
    </source>
</reference>
<reference key="2">
    <citation type="journal article" date="1991" name="Mol. Microbiol.">
        <title>Gene sequences and comparison of the fimbrial subunits representative of Bacteroides nodosus serotypes A to I: class I and class II strains.</title>
        <authorList>
            <person name="Mattick J.S."/>
            <person name="Anderson B.J."/>
            <person name="Cox P.T."/>
            <person name="Dalrymple B.P."/>
            <person name="Bills M.M."/>
            <person name="Hobbs M."/>
            <person name="Egerton J.R."/>
        </authorList>
    </citation>
    <scope>NUCLEOTIDE SEQUENCE [GENOMIC DNA]</scope>
    <source>
        <strain>Serogroup H1 isolate VCS1215</strain>
    </source>
</reference>
<organism>
    <name type="scientific">Dichelobacter nodosus</name>
    <name type="common">Bacteroides nodosus</name>
    <dbReference type="NCBI Taxonomy" id="870"/>
    <lineage>
        <taxon>Bacteria</taxon>
        <taxon>Pseudomonadati</taxon>
        <taxon>Pseudomonadota</taxon>
        <taxon>Gammaproteobacteria</taxon>
        <taxon>Cardiobacteriales</taxon>
        <taxon>Cardiobacteriaceae</taxon>
        <taxon>Dichelobacter</taxon>
    </lineage>
</organism>
<keyword id="KW-1015">Disulfide bond</keyword>
<keyword id="KW-0281">Fimbrium</keyword>
<keyword id="KW-0472">Membrane</keyword>
<keyword id="KW-0488">Methylation</keyword>
<keyword id="KW-0812">Transmembrane</keyword>
<keyword id="KW-1133">Transmembrane helix</keyword>
<name>FMAH_DICNO</name>
<gene>
    <name type="primary">fimA</name>
</gene>
<accession>P04953</accession>
<proteinExistence type="evidence at protein level"/>
<feature type="propeptide" id="PRO_0000024137" description="Leader sequence" evidence="3">
    <location>
        <begin position="1"/>
        <end position="7"/>
    </location>
</feature>
<feature type="chain" id="PRO_0000024138" description="Pilin subunit 1">
    <location>
        <begin position="8"/>
        <end position="79"/>
    </location>
</feature>
<feature type="chain" id="PRO_0000024139" description="Pilin subunit 2">
    <location>
        <begin position="80"/>
        <end position="156"/>
    </location>
</feature>
<feature type="transmembrane region" description="Helical" evidence="2">
    <location>
        <begin position="8"/>
        <end position="28"/>
    </location>
</feature>
<feature type="modified residue" description="N-methylphenylalanine" evidence="3">
    <location>
        <position position="8"/>
    </location>
</feature>
<feature type="disulfide bond">
    <location>
        <begin position="57"/>
        <end position="67"/>
    </location>
</feature>
<feature type="disulfide bond">
    <location>
        <begin position="141"/>
        <end position="154"/>
    </location>
</feature>
<feature type="sequence variant" description="In strain: Serogroup H1 isolate VCS1215.">
    <original>A</original>
    <variation>E</variation>
    <location>
        <position position="91"/>
    </location>
</feature>
<feature type="sequence variant" description="In strain: Serogroup H1 isolate VCS1215.">
    <original>E</original>
    <variation>G</variation>
    <location>
        <position position="105"/>
    </location>
</feature>
<feature type="sequence variant" description="In strain: Serogroup H1 isolate VCS1215.">
    <original>K</original>
    <variation>Q</variation>
    <location>
        <position position="156"/>
    </location>
</feature>
<sequence>MKSLQKGFTLIELMIVVAIIGILAAIAIPQYQNYIARSQVSRVMSETGQMRTAIETCLLDGKEGKDCFIGWTTSNLLAAAGGSTTNNATAADPGQGGLNITYALESTAENKIEATFGQNAAATLHGKKLTWTRSPEATWSCSTDVDEKFKPTGCKK</sequence>
<comment type="function">
    <text evidence="1">Major component of the type IV fimbriae that plays an essential role in twitching motility, natural transformation, and protease secretion.</text>
</comment>
<comment type="subunit">
    <text>The pili are polar flexible filaments of about 5.4 nanometers diameter and 2.5 micrometers average length; they consist of only a single polypeptide chain arranged in a helical configuration of five subunits per turn in the assembled pilus.</text>
</comment>
<comment type="subcellular location">
    <subcellularLocation>
        <location evidence="1">Fimbrium</location>
    </subcellularLocation>
    <subcellularLocation>
        <location evidence="2">Membrane</location>
        <topology evidence="2">Single-pass membrane protein</topology>
    </subcellularLocation>
</comment>
<comment type="miscellaneous">
    <text>The sequence shown is that of isolate 265.</text>
</comment>
<comment type="similarity">
    <text evidence="4">Belongs to the N-Me-Phe pilin family.</text>
</comment>
<evidence type="ECO:0000250" key="1">
    <source>
        <dbReference type="UniProtKB" id="A5EWR9"/>
    </source>
</evidence>
<evidence type="ECO:0000255" key="2"/>
<evidence type="ECO:0000255" key="3">
    <source>
        <dbReference type="PROSITE-ProRule" id="PRU01070"/>
    </source>
</evidence>
<evidence type="ECO:0000305" key="4"/>